<gene>
    <name evidence="3" type="primary">RXLR85</name>
</gene>
<accession>P0CV30</accession>
<proteinExistence type="evidence at transcript level"/>
<organism>
    <name type="scientific">Plasmopara viticola</name>
    <name type="common">Downy mildew of grapevine</name>
    <name type="synonym">Botrytis viticola</name>
    <dbReference type="NCBI Taxonomy" id="143451"/>
    <lineage>
        <taxon>Eukaryota</taxon>
        <taxon>Sar</taxon>
        <taxon>Stramenopiles</taxon>
        <taxon>Oomycota</taxon>
        <taxon>Peronosporales</taxon>
        <taxon>Peronosporaceae</taxon>
        <taxon>Plasmopara</taxon>
    </lineage>
</organism>
<evidence type="ECO:0000255" key="1"/>
<evidence type="ECO:0000269" key="2">
    <source>
    </source>
</evidence>
<evidence type="ECO:0000303" key="3">
    <source>
    </source>
</evidence>
<evidence type="ECO:0000305" key="4"/>
<evidence type="ECO:0000305" key="5">
    <source>
    </source>
</evidence>
<comment type="function">
    <text evidence="2">Secreted effector that partially suppresses the host cell death induced by cell death-inducing proteins.</text>
</comment>
<comment type="subcellular location">
    <subcellularLocation>
        <location evidence="2">Secreted</location>
    </subcellularLocation>
    <subcellularLocation>
        <location evidence="2">Host cell membrane</location>
    </subcellularLocation>
</comment>
<comment type="domain">
    <text evidence="5">Has the canonical translocation RxLR motif, but lacks the canonical EER motif, which characterizes most oomycete effectors identified so far.</text>
</comment>
<comment type="similarity">
    <text evidence="4">Belongs to the RxLR effector family.</text>
</comment>
<feature type="signal peptide" evidence="1">
    <location>
        <begin position="1"/>
        <end position="27"/>
    </location>
</feature>
<feature type="chain" id="PRO_0000447939" description="Secreted RxLR effector protein 85">
    <location>
        <begin position="28"/>
        <end position="276"/>
    </location>
</feature>
<feature type="short sequence motif" description="RxLR" evidence="5">
    <location>
        <begin position="110"/>
        <end position="113"/>
    </location>
</feature>
<keyword id="KW-1032">Host cell membrane</keyword>
<keyword id="KW-1043">Host membrane</keyword>
<keyword id="KW-0472">Membrane</keyword>
<keyword id="KW-0964">Secreted</keyword>
<keyword id="KW-0732">Signal</keyword>
<keyword id="KW-0843">Virulence</keyword>
<name>RLR85_PLAVT</name>
<reference key="1">
    <citation type="journal article" date="2018" name="Front. Plant Sci.">
        <title>In planta functional analysis and subcellular localization of the oomycete pathogen Plasmopara viticola candidate RXLR effector repertoire.</title>
        <authorList>
            <person name="Liu Y."/>
            <person name="Lan X."/>
            <person name="Song S."/>
            <person name="Yin L."/>
            <person name="Dry I.B."/>
            <person name="Qu J."/>
            <person name="Xiang J."/>
            <person name="Lu J."/>
        </authorList>
    </citation>
    <scope>NUCLEOTIDE SEQUENCE [MRNA]</scope>
    <scope>DOMAIN</scope>
    <scope>FUNCTION</scope>
    <scope>SUBCELLULAR LOCATION</scope>
</reference>
<dbReference type="GO" id="GO:0005576">
    <property type="term" value="C:extracellular region"/>
    <property type="evidence" value="ECO:0007669"/>
    <property type="project" value="UniProtKB-SubCell"/>
</dbReference>
<dbReference type="GO" id="GO:0020002">
    <property type="term" value="C:host cell plasma membrane"/>
    <property type="evidence" value="ECO:0007669"/>
    <property type="project" value="UniProtKB-SubCell"/>
</dbReference>
<dbReference type="GO" id="GO:0016020">
    <property type="term" value="C:membrane"/>
    <property type="evidence" value="ECO:0007669"/>
    <property type="project" value="UniProtKB-KW"/>
</dbReference>
<sequence length="276" mass="31478">MRYCAFRLGLFFIGYSCCVLLSTPTLASSLEKSDAESTQTEQWNSNGKRILEADDPKLSLEGERGITPEVVPAFEAIGKAKTPEKAVPRMSLRSKLNPVNWAKGLWFKLRQLRARYRAWRLRRIIADKRGLGPALLNGLTPLHVKNVKDETIRYSKFGPDAINQIEKDYDSFVKLYFAQFDGLHKDPPIVKMDILDKMVKEMSSIERLAVRTSLDRVRLTVDAGYSFEKLISLDVSPLLYMRLLDAEGAFSDVDKNRDAINHLKGYVKAYYKHITL</sequence>
<protein>
    <recommendedName>
        <fullName evidence="3">Secreted RxLR effector protein 85</fullName>
    </recommendedName>
</protein>